<organism>
    <name type="scientific">Xenopus laevis</name>
    <name type="common">African clawed frog</name>
    <dbReference type="NCBI Taxonomy" id="8355"/>
    <lineage>
        <taxon>Eukaryota</taxon>
        <taxon>Metazoa</taxon>
        <taxon>Chordata</taxon>
        <taxon>Craniata</taxon>
        <taxon>Vertebrata</taxon>
        <taxon>Euteleostomi</taxon>
        <taxon>Amphibia</taxon>
        <taxon>Batrachia</taxon>
        <taxon>Anura</taxon>
        <taxon>Pipoidea</taxon>
        <taxon>Pipidae</taxon>
        <taxon>Xenopodinae</taxon>
        <taxon>Xenopus</taxon>
        <taxon>Xenopus</taxon>
    </lineage>
</organism>
<proteinExistence type="evidence at transcript level"/>
<dbReference type="EMBL" id="BC084216">
    <property type="protein sequence ID" value="AAH84216.1"/>
    <property type="molecule type" value="mRNA"/>
</dbReference>
<dbReference type="RefSeq" id="NP_001088231.1">
    <property type="nucleotide sequence ID" value="NM_001094762.1"/>
</dbReference>
<dbReference type="SMR" id="Q5XH57"/>
<dbReference type="DNASU" id="495061"/>
<dbReference type="GeneID" id="495061"/>
<dbReference type="KEGG" id="xla:495061"/>
<dbReference type="AGR" id="Xenbase:XB-GENE-6254530"/>
<dbReference type="CTD" id="495061"/>
<dbReference type="Xenbase" id="XB-GENE-6254530">
    <property type="gene designation" value="ormdl1.S"/>
</dbReference>
<dbReference type="OMA" id="IVSAFRC"/>
<dbReference type="OrthoDB" id="1932233at2759"/>
<dbReference type="Proteomes" id="UP000186698">
    <property type="component" value="Chromosome 9_10S"/>
</dbReference>
<dbReference type="Bgee" id="495061">
    <property type="expression patterns" value="Expressed in brain and 19 other cell types or tissues"/>
</dbReference>
<dbReference type="GO" id="GO:0005789">
    <property type="term" value="C:endoplasmic reticulum membrane"/>
    <property type="evidence" value="ECO:0000250"/>
    <property type="project" value="UniProtKB"/>
</dbReference>
<dbReference type="GO" id="GO:0017059">
    <property type="term" value="C:serine palmitoyltransferase complex"/>
    <property type="evidence" value="ECO:0000318"/>
    <property type="project" value="GO_Central"/>
</dbReference>
<dbReference type="GO" id="GO:0006672">
    <property type="term" value="P:ceramide metabolic process"/>
    <property type="evidence" value="ECO:0000250"/>
    <property type="project" value="UniProtKB"/>
</dbReference>
<dbReference type="GO" id="GO:0090156">
    <property type="term" value="P:intracellular sphingolipid homeostasis"/>
    <property type="evidence" value="ECO:0000318"/>
    <property type="project" value="GO_Central"/>
</dbReference>
<dbReference type="GO" id="GO:2000303">
    <property type="term" value="P:regulation of ceramide biosynthetic process"/>
    <property type="evidence" value="ECO:0007669"/>
    <property type="project" value="UniProtKB-ARBA"/>
</dbReference>
<dbReference type="GO" id="GO:0030148">
    <property type="term" value="P:sphingolipid biosynthetic process"/>
    <property type="evidence" value="ECO:0000318"/>
    <property type="project" value="GO_Central"/>
</dbReference>
<dbReference type="InterPro" id="IPR007203">
    <property type="entry name" value="ORMDL"/>
</dbReference>
<dbReference type="PANTHER" id="PTHR12665">
    <property type="entry name" value="ORMDL PROTEINS"/>
    <property type="match status" value="1"/>
</dbReference>
<dbReference type="Pfam" id="PF04061">
    <property type="entry name" value="ORMDL"/>
    <property type="match status" value="1"/>
</dbReference>
<dbReference type="PIRSF" id="PIRSF018147">
    <property type="entry name" value="ORMDL"/>
    <property type="match status" value="1"/>
</dbReference>
<name>ORML1_XENLA</name>
<keyword id="KW-0256">Endoplasmic reticulum</keyword>
<keyword id="KW-0472">Membrane</keyword>
<keyword id="KW-1185">Reference proteome</keyword>
<keyword id="KW-0812">Transmembrane</keyword>
<keyword id="KW-1133">Transmembrane helix</keyword>
<reference key="1">
    <citation type="submission" date="2004-10" db="EMBL/GenBank/DDBJ databases">
        <authorList>
            <consortium name="NIH - Xenopus Gene Collection (XGC) project"/>
        </authorList>
    </citation>
    <scope>NUCLEOTIDE SEQUENCE [LARGE SCALE MRNA]</scope>
    <source>
        <tissue>Spleen</tissue>
    </source>
</reference>
<comment type="function">
    <text evidence="1 2">Plays an essential role in the homeostatic regulation of sphingolipid de novo biosynthesis by modulating the activity of the serine palmitoyltransferase (SPT) in response to ceramide levels (By similarity). When complexed to SPT, the binding of ceramides to its N-terminus stabilizes a conformation that block SPT substrate entry, hence preventing SPT catalytic activity. Through this mechanism, maintains ceramide levels at sufficient concentrations for the production of complex sphingolipids, but which prevents the accumulation of ceramides to levels that trigger apoptosis (By similarity).</text>
</comment>
<comment type="subunit">
    <text evidence="1">Ceramide-sensitive subunit of the serine palmitoyltransferase (SPT) complex, which is also composed of SPTLC1, SPTLC2/3 and SPTSSA/B.</text>
</comment>
<comment type="subcellular location">
    <subcellularLocation>
        <location evidence="3">Endoplasmic reticulum membrane</location>
        <topology evidence="3">Multi-pass membrane protein</topology>
    </subcellularLocation>
</comment>
<comment type="domain">
    <text evidence="1">Ceramides bind to ORMDL3 N-terminus and stabilize it in a conformation that physically restricts the accessibility of the substrates to their binding sites in the serine palmitoyltransferase (SPT) complex, hence inhibiting SPT catalytic activity. In the absence of ceramides, the N-terminus is flexible and permits substrate binding, thus liberating SPT from inhibition.</text>
</comment>
<comment type="similarity">
    <text evidence="5">Belongs to the ORM family.</text>
</comment>
<accession>Q5XH57</accession>
<feature type="chain" id="PRO_0000215634" description="ORM1-like protein 1">
    <location>
        <begin position="1"/>
        <end position="153"/>
    </location>
</feature>
<feature type="topological domain" description="Cytoplasmic" evidence="4">
    <location>
        <begin position="1"/>
        <end position="26"/>
    </location>
</feature>
<feature type="transmembrane region" description="Helical" evidence="4">
    <location>
        <begin position="27"/>
        <end position="46"/>
    </location>
</feature>
<feature type="transmembrane region" description="Helical" evidence="4">
    <location>
        <begin position="47"/>
        <end position="67"/>
    </location>
</feature>
<feature type="topological domain" description="Cytoplasmic" evidence="4">
    <location>
        <begin position="68"/>
        <end position="100"/>
    </location>
</feature>
<feature type="transmembrane region" description="Helical" evidence="4">
    <location>
        <begin position="101"/>
        <end position="121"/>
    </location>
</feature>
<feature type="topological domain" description="Extracellular" evidence="4">
    <location>
        <begin position="122"/>
        <end position="123"/>
    </location>
</feature>
<feature type="transmembrane region" description="Helical" evidence="4">
    <location>
        <begin position="124"/>
        <end position="144"/>
    </location>
</feature>
<feature type="topological domain" description="Cytoplasmic" evidence="4">
    <location>
        <begin position="145"/>
        <end position="153"/>
    </location>
</feature>
<gene>
    <name type="primary">ormdl1</name>
</gene>
<evidence type="ECO:0000250" key="1">
    <source>
        <dbReference type="UniProtKB" id="Q8N138"/>
    </source>
</evidence>
<evidence type="ECO:0000250" key="2">
    <source>
        <dbReference type="UniProtKB" id="Q921I0"/>
    </source>
</evidence>
<evidence type="ECO:0000250" key="3">
    <source>
        <dbReference type="UniProtKB" id="Q9P0S3"/>
    </source>
</evidence>
<evidence type="ECO:0000255" key="4"/>
<evidence type="ECO:0000305" key="5"/>
<sequence length="153" mass="17357">MNVGVAHSEVNPNTRVMNSRGMWLTYALGVGMLHIVLLSIPFFSVPVAWTLTNVIHNLGMYVFLHAVKGTPFETPDQGKARLLTHWEQLDYGVQFTSSRKFLTISPIILYFLASFYTKYDPTHFFINTASLLSVLIPKLPQLHGVRIFGINKY</sequence>
<protein>
    <recommendedName>
        <fullName>ORM1-like protein 1</fullName>
    </recommendedName>
</protein>